<reference key="1">
    <citation type="submission" date="2004-11" db="EMBL/GenBank/DDBJ databases">
        <authorList>
            <consortium name="The German cDNA consortium"/>
        </authorList>
    </citation>
    <scope>NUCLEOTIDE SEQUENCE [LARGE SCALE MRNA]</scope>
    <source>
        <tissue>Heart</tissue>
    </source>
</reference>
<dbReference type="EC" id="3.1.3.16"/>
<dbReference type="EC" id="3.1.3.48"/>
<dbReference type="EMBL" id="CR860513">
    <property type="protein sequence ID" value="CAH92640.1"/>
    <property type="molecule type" value="mRNA"/>
</dbReference>
<dbReference type="RefSeq" id="NP_001126545.1">
    <property type="nucleotide sequence ID" value="NM_001133073.1"/>
</dbReference>
<dbReference type="RefSeq" id="XP_024106376.1">
    <property type="nucleotide sequence ID" value="XM_024250608.3"/>
</dbReference>
<dbReference type="SMR" id="Q5R6H6"/>
<dbReference type="FunCoup" id="Q5R6H6">
    <property type="interactions" value="290"/>
</dbReference>
<dbReference type="STRING" id="9601.ENSPPYP00000020739"/>
<dbReference type="Ensembl" id="ENSPPYT00000021569.3">
    <property type="protein sequence ID" value="ENSPPYP00000020739.2"/>
    <property type="gene ID" value="ENSPPYG00000018499.3"/>
</dbReference>
<dbReference type="GeneID" id="100173535"/>
<dbReference type="KEGG" id="pon:100173535"/>
<dbReference type="CTD" id="78986"/>
<dbReference type="eggNOG" id="KOG1716">
    <property type="taxonomic scope" value="Eukaryota"/>
</dbReference>
<dbReference type="GeneTree" id="ENSGT00940000158107"/>
<dbReference type="HOGENOM" id="CLU_027074_11_3_1"/>
<dbReference type="InParanoid" id="Q5R6H6"/>
<dbReference type="OMA" id="MSIHFQA"/>
<dbReference type="OrthoDB" id="2017893at2759"/>
<dbReference type="TreeFam" id="TF105128"/>
<dbReference type="Proteomes" id="UP000001595">
    <property type="component" value="Chromosome 8"/>
</dbReference>
<dbReference type="GO" id="GO:0005794">
    <property type="term" value="C:Golgi apparatus"/>
    <property type="evidence" value="ECO:0007669"/>
    <property type="project" value="UniProtKB-SubCell"/>
</dbReference>
<dbReference type="GO" id="GO:0005654">
    <property type="term" value="C:nucleoplasm"/>
    <property type="evidence" value="ECO:0007669"/>
    <property type="project" value="Ensembl"/>
</dbReference>
<dbReference type="GO" id="GO:0033549">
    <property type="term" value="F:MAP kinase phosphatase activity"/>
    <property type="evidence" value="ECO:0007669"/>
    <property type="project" value="TreeGrafter"/>
</dbReference>
<dbReference type="GO" id="GO:0002039">
    <property type="term" value="F:p53 binding"/>
    <property type="evidence" value="ECO:0007669"/>
    <property type="project" value="Ensembl"/>
</dbReference>
<dbReference type="GO" id="GO:0004722">
    <property type="term" value="F:protein serine/threonine phosphatase activity"/>
    <property type="evidence" value="ECO:0007669"/>
    <property type="project" value="UniProtKB-EC"/>
</dbReference>
<dbReference type="GO" id="GO:0004725">
    <property type="term" value="F:protein tyrosine phosphatase activity"/>
    <property type="evidence" value="ECO:0007669"/>
    <property type="project" value="UniProtKB-EC"/>
</dbReference>
<dbReference type="GO" id="GO:0008138">
    <property type="term" value="F:protein tyrosine/serine/threonine phosphatase activity"/>
    <property type="evidence" value="ECO:0007669"/>
    <property type="project" value="Ensembl"/>
</dbReference>
<dbReference type="GO" id="GO:0061629">
    <property type="term" value="F:RNA polymerase II-specific DNA-binding transcription factor binding"/>
    <property type="evidence" value="ECO:0007669"/>
    <property type="project" value="Ensembl"/>
</dbReference>
<dbReference type="GO" id="GO:0070373">
    <property type="term" value="P:negative regulation of ERK1 and ERK2 cascade"/>
    <property type="evidence" value="ECO:0007669"/>
    <property type="project" value="Ensembl"/>
</dbReference>
<dbReference type="GO" id="GO:0000122">
    <property type="term" value="P:negative regulation of transcription by RNA polymerase II"/>
    <property type="evidence" value="ECO:0007669"/>
    <property type="project" value="Ensembl"/>
</dbReference>
<dbReference type="GO" id="GO:0045785">
    <property type="term" value="P:positive regulation of cell adhesion"/>
    <property type="evidence" value="ECO:0007669"/>
    <property type="project" value="Ensembl"/>
</dbReference>
<dbReference type="CDD" id="cd14578">
    <property type="entry name" value="DUSP26"/>
    <property type="match status" value="1"/>
</dbReference>
<dbReference type="FunFam" id="3.90.190.10:FF:000037">
    <property type="entry name" value="dual specificity protein phosphatase 26"/>
    <property type="match status" value="1"/>
</dbReference>
<dbReference type="Gene3D" id="3.90.190.10">
    <property type="entry name" value="Protein tyrosine phosphatase superfamily"/>
    <property type="match status" value="1"/>
</dbReference>
<dbReference type="InterPro" id="IPR020405">
    <property type="entry name" value="Atypical_DUSP_subfamA"/>
</dbReference>
<dbReference type="InterPro" id="IPR000340">
    <property type="entry name" value="Dual-sp_phosphatase_cat-dom"/>
</dbReference>
<dbReference type="InterPro" id="IPR029021">
    <property type="entry name" value="Prot-tyrosine_phosphatase-like"/>
</dbReference>
<dbReference type="InterPro" id="IPR016130">
    <property type="entry name" value="Tyr_Pase_AS"/>
</dbReference>
<dbReference type="InterPro" id="IPR000387">
    <property type="entry name" value="Tyr_Pase_dom"/>
</dbReference>
<dbReference type="InterPro" id="IPR020422">
    <property type="entry name" value="TYR_PHOSPHATASE_DUAL_dom"/>
</dbReference>
<dbReference type="PANTHER" id="PTHR45682">
    <property type="entry name" value="AGAP008228-PA"/>
    <property type="match status" value="1"/>
</dbReference>
<dbReference type="PANTHER" id="PTHR45682:SF8">
    <property type="entry name" value="DUAL SPECIFICITY PROTEIN PHOSPHATASE 26"/>
    <property type="match status" value="1"/>
</dbReference>
<dbReference type="Pfam" id="PF00782">
    <property type="entry name" value="DSPc"/>
    <property type="match status" value="1"/>
</dbReference>
<dbReference type="PRINTS" id="PR01908">
    <property type="entry name" value="ADSPHPHTASE"/>
</dbReference>
<dbReference type="PRINTS" id="PR01909">
    <property type="entry name" value="ADSPHPHTASEA"/>
</dbReference>
<dbReference type="SMART" id="SM00195">
    <property type="entry name" value="DSPc"/>
    <property type="match status" value="1"/>
</dbReference>
<dbReference type="SUPFAM" id="SSF52799">
    <property type="entry name" value="(Phosphotyrosine protein) phosphatases II"/>
    <property type="match status" value="1"/>
</dbReference>
<dbReference type="PROSITE" id="PS00383">
    <property type="entry name" value="TYR_PHOSPHATASE_1"/>
    <property type="match status" value="1"/>
</dbReference>
<dbReference type="PROSITE" id="PS50056">
    <property type="entry name" value="TYR_PHOSPHATASE_2"/>
    <property type="match status" value="1"/>
</dbReference>
<dbReference type="PROSITE" id="PS50054">
    <property type="entry name" value="TYR_PHOSPHATASE_DUAL"/>
    <property type="match status" value="1"/>
</dbReference>
<keyword id="KW-0963">Cytoplasm</keyword>
<keyword id="KW-0333">Golgi apparatus</keyword>
<keyword id="KW-0378">Hydrolase</keyword>
<keyword id="KW-0539">Nucleus</keyword>
<keyword id="KW-0904">Protein phosphatase</keyword>
<keyword id="KW-1185">Reference proteome</keyword>
<evidence type="ECO:0000250" key="1"/>
<evidence type="ECO:0000255" key="2">
    <source>
        <dbReference type="PROSITE-ProRule" id="PRU00160"/>
    </source>
</evidence>
<evidence type="ECO:0000255" key="3">
    <source>
        <dbReference type="PROSITE-ProRule" id="PRU10044"/>
    </source>
</evidence>
<evidence type="ECO:0000305" key="4"/>
<protein>
    <recommendedName>
        <fullName>Dual specificity protein phosphatase 26</fullName>
        <ecNumber>3.1.3.16</ecNumber>
        <ecNumber>3.1.3.48</ecNumber>
    </recommendedName>
</protein>
<gene>
    <name type="primary">DUSP26</name>
</gene>
<comment type="function">
    <text evidence="1">Inactivates MAPK1 and MAPK3 which leads to dephosphorylation of heat shock factor protein 4 and a reduction in its DNA-binding activity.</text>
</comment>
<comment type="catalytic activity">
    <reaction evidence="3">
        <text>O-phospho-L-tyrosyl-[protein] + H2O = L-tyrosyl-[protein] + phosphate</text>
        <dbReference type="Rhea" id="RHEA:10684"/>
        <dbReference type="Rhea" id="RHEA-COMP:10136"/>
        <dbReference type="Rhea" id="RHEA-COMP:20101"/>
        <dbReference type="ChEBI" id="CHEBI:15377"/>
        <dbReference type="ChEBI" id="CHEBI:43474"/>
        <dbReference type="ChEBI" id="CHEBI:46858"/>
        <dbReference type="ChEBI" id="CHEBI:61978"/>
        <dbReference type="EC" id="3.1.3.48"/>
    </reaction>
</comment>
<comment type="catalytic activity">
    <reaction>
        <text>O-phospho-L-seryl-[protein] + H2O = L-seryl-[protein] + phosphate</text>
        <dbReference type="Rhea" id="RHEA:20629"/>
        <dbReference type="Rhea" id="RHEA-COMP:9863"/>
        <dbReference type="Rhea" id="RHEA-COMP:11604"/>
        <dbReference type="ChEBI" id="CHEBI:15377"/>
        <dbReference type="ChEBI" id="CHEBI:29999"/>
        <dbReference type="ChEBI" id="CHEBI:43474"/>
        <dbReference type="ChEBI" id="CHEBI:83421"/>
        <dbReference type="EC" id="3.1.3.16"/>
    </reaction>
</comment>
<comment type="catalytic activity">
    <reaction>
        <text>O-phospho-L-threonyl-[protein] + H2O = L-threonyl-[protein] + phosphate</text>
        <dbReference type="Rhea" id="RHEA:47004"/>
        <dbReference type="Rhea" id="RHEA-COMP:11060"/>
        <dbReference type="Rhea" id="RHEA-COMP:11605"/>
        <dbReference type="ChEBI" id="CHEBI:15377"/>
        <dbReference type="ChEBI" id="CHEBI:30013"/>
        <dbReference type="ChEBI" id="CHEBI:43474"/>
        <dbReference type="ChEBI" id="CHEBI:61977"/>
        <dbReference type="EC" id="3.1.3.16"/>
    </reaction>
</comment>
<comment type="subunit">
    <text evidence="1">Interacts with HSF4.</text>
</comment>
<comment type="subcellular location">
    <subcellularLocation>
        <location evidence="1">Cytoplasm</location>
    </subcellularLocation>
    <subcellularLocation>
        <location evidence="1">Nucleus</location>
    </subcellularLocation>
    <subcellularLocation>
        <location evidence="1">Golgi apparatus</location>
    </subcellularLocation>
</comment>
<comment type="similarity">
    <text evidence="4">Belongs to the protein-tyrosine phosphatase family. Non-receptor class dual specificity subfamily.</text>
</comment>
<organism>
    <name type="scientific">Pongo abelii</name>
    <name type="common">Sumatran orangutan</name>
    <name type="synonym">Pongo pygmaeus abelii</name>
    <dbReference type="NCBI Taxonomy" id="9601"/>
    <lineage>
        <taxon>Eukaryota</taxon>
        <taxon>Metazoa</taxon>
        <taxon>Chordata</taxon>
        <taxon>Craniata</taxon>
        <taxon>Vertebrata</taxon>
        <taxon>Euteleostomi</taxon>
        <taxon>Mammalia</taxon>
        <taxon>Eutheria</taxon>
        <taxon>Euarchontoglires</taxon>
        <taxon>Primates</taxon>
        <taxon>Haplorrhini</taxon>
        <taxon>Catarrhini</taxon>
        <taxon>Hominidae</taxon>
        <taxon>Pongo</taxon>
    </lineage>
</organism>
<accession>Q5R6H6</accession>
<name>DUS26_PONAB</name>
<proteinExistence type="evidence at transcript level"/>
<sequence>MCPGNWLWASMTFMARFSRSSSRSPVRTRGNLEEMPTVQHPFLNVFELERLLYTGKTACNHADEVWPGLYLGDQDMANNRRELRRLGITHVLNASHSRWRGTPEAYEGLGIRYLGVEAHDSPAFDMSIHFQTAADFIHRALSQPGGKILVHCAVGVSRSATLVLAYLMLYHHLTLVEAIKKVKDHRGIIPNRGFLRQLLALDRRLRQGLEA</sequence>
<feature type="chain" id="PRO_0000292221" description="Dual specificity protein phosphatase 26">
    <location>
        <begin position="1"/>
        <end position="211"/>
    </location>
</feature>
<feature type="domain" description="Tyrosine-protein phosphatase" evidence="2">
    <location>
        <begin position="60"/>
        <end position="207"/>
    </location>
</feature>
<feature type="active site" description="Phosphocysteine intermediate" evidence="2">
    <location>
        <position position="152"/>
    </location>
</feature>